<dbReference type="EC" id="6.3.4.5" evidence="1"/>
<dbReference type="EMBL" id="AM946015">
    <property type="protein sequence ID" value="CAR43561.1"/>
    <property type="molecule type" value="Genomic_DNA"/>
</dbReference>
<dbReference type="RefSeq" id="WP_015911966.1">
    <property type="nucleotide sequence ID" value="NC_012004.1"/>
</dbReference>
<dbReference type="SMR" id="B9DVV9"/>
<dbReference type="STRING" id="218495.SUB1669"/>
<dbReference type="KEGG" id="sub:SUB1669"/>
<dbReference type="eggNOG" id="COG0137">
    <property type="taxonomic scope" value="Bacteria"/>
</dbReference>
<dbReference type="HOGENOM" id="CLU_032784_4_2_9"/>
<dbReference type="OrthoDB" id="9801641at2"/>
<dbReference type="UniPathway" id="UPA00068">
    <property type="reaction ID" value="UER00113"/>
</dbReference>
<dbReference type="Proteomes" id="UP000000449">
    <property type="component" value="Chromosome"/>
</dbReference>
<dbReference type="GO" id="GO:0005737">
    <property type="term" value="C:cytoplasm"/>
    <property type="evidence" value="ECO:0007669"/>
    <property type="project" value="UniProtKB-SubCell"/>
</dbReference>
<dbReference type="GO" id="GO:0004055">
    <property type="term" value="F:argininosuccinate synthase activity"/>
    <property type="evidence" value="ECO:0007669"/>
    <property type="project" value="UniProtKB-UniRule"/>
</dbReference>
<dbReference type="GO" id="GO:0005524">
    <property type="term" value="F:ATP binding"/>
    <property type="evidence" value="ECO:0007669"/>
    <property type="project" value="UniProtKB-UniRule"/>
</dbReference>
<dbReference type="GO" id="GO:0000053">
    <property type="term" value="P:argininosuccinate metabolic process"/>
    <property type="evidence" value="ECO:0007669"/>
    <property type="project" value="TreeGrafter"/>
</dbReference>
<dbReference type="GO" id="GO:0006526">
    <property type="term" value="P:L-arginine biosynthetic process"/>
    <property type="evidence" value="ECO:0007669"/>
    <property type="project" value="UniProtKB-UniRule"/>
</dbReference>
<dbReference type="GO" id="GO:0000050">
    <property type="term" value="P:urea cycle"/>
    <property type="evidence" value="ECO:0007669"/>
    <property type="project" value="TreeGrafter"/>
</dbReference>
<dbReference type="CDD" id="cd01999">
    <property type="entry name" value="ASS"/>
    <property type="match status" value="1"/>
</dbReference>
<dbReference type="FunFam" id="1.20.5.470:FF:000002">
    <property type="entry name" value="Argininosuccinate synthase"/>
    <property type="match status" value="1"/>
</dbReference>
<dbReference type="FunFam" id="3.40.50.620:FF:000038">
    <property type="entry name" value="Argininosuccinate synthase"/>
    <property type="match status" value="1"/>
</dbReference>
<dbReference type="FunFam" id="3.90.1260.10:FF:000007">
    <property type="entry name" value="Argininosuccinate synthase"/>
    <property type="match status" value="1"/>
</dbReference>
<dbReference type="Gene3D" id="3.90.1260.10">
    <property type="entry name" value="Argininosuccinate synthetase, chain A, domain 2"/>
    <property type="match status" value="1"/>
</dbReference>
<dbReference type="Gene3D" id="3.40.50.620">
    <property type="entry name" value="HUPs"/>
    <property type="match status" value="1"/>
</dbReference>
<dbReference type="Gene3D" id="1.20.5.470">
    <property type="entry name" value="Single helix bin"/>
    <property type="match status" value="1"/>
</dbReference>
<dbReference type="HAMAP" id="MF_00005">
    <property type="entry name" value="Arg_succ_synth_type1"/>
    <property type="match status" value="1"/>
</dbReference>
<dbReference type="InterPro" id="IPR048268">
    <property type="entry name" value="Arginosuc_syn_C"/>
</dbReference>
<dbReference type="InterPro" id="IPR048267">
    <property type="entry name" value="Arginosuc_syn_N"/>
</dbReference>
<dbReference type="InterPro" id="IPR001518">
    <property type="entry name" value="Arginosuc_synth"/>
</dbReference>
<dbReference type="InterPro" id="IPR018223">
    <property type="entry name" value="Arginosuc_synth_CS"/>
</dbReference>
<dbReference type="InterPro" id="IPR023434">
    <property type="entry name" value="Arginosuc_synth_type_1_subfam"/>
</dbReference>
<dbReference type="InterPro" id="IPR024074">
    <property type="entry name" value="AS_cat/multimer_dom_body"/>
</dbReference>
<dbReference type="InterPro" id="IPR014729">
    <property type="entry name" value="Rossmann-like_a/b/a_fold"/>
</dbReference>
<dbReference type="NCBIfam" id="TIGR00032">
    <property type="entry name" value="argG"/>
    <property type="match status" value="1"/>
</dbReference>
<dbReference type="NCBIfam" id="NF001770">
    <property type="entry name" value="PRK00509.1"/>
    <property type="match status" value="1"/>
</dbReference>
<dbReference type="PANTHER" id="PTHR11587">
    <property type="entry name" value="ARGININOSUCCINATE SYNTHASE"/>
    <property type="match status" value="1"/>
</dbReference>
<dbReference type="PANTHER" id="PTHR11587:SF2">
    <property type="entry name" value="ARGININOSUCCINATE SYNTHASE"/>
    <property type="match status" value="1"/>
</dbReference>
<dbReference type="Pfam" id="PF20979">
    <property type="entry name" value="Arginosuc_syn_C"/>
    <property type="match status" value="1"/>
</dbReference>
<dbReference type="Pfam" id="PF00764">
    <property type="entry name" value="Arginosuc_synth"/>
    <property type="match status" value="1"/>
</dbReference>
<dbReference type="SUPFAM" id="SSF52402">
    <property type="entry name" value="Adenine nucleotide alpha hydrolases-like"/>
    <property type="match status" value="1"/>
</dbReference>
<dbReference type="SUPFAM" id="SSF69864">
    <property type="entry name" value="Argininosuccinate synthetase, C-terminal domain"/>
    <property type="match status" value="1"/>
</dbReference>
<dbReference type="PROSITE" id="PS00564">
    <property type="entry name" value="ARGININOSUCCIN_SYN_1"/>
    <property type="match status" value="1"/>
</dbReference>
<dbReference type="PROSITE" id="PS00565">
    <property type="entry name" value="ARGININOSUCCIN_SYN_2"/>
    <property type="match status" value="1"/>
</dbReference>
<proteinExistence type="inferred from homology"/>
<gene>
    <name evidence="1" type="primary">argG</name>
    <name type="ordered locus">SUB1669</name>
</gene>
<comment type="catalytic activity">
    <reaction evidence="1">
        <text>L-citrulline + L-aspartate + ATP = 2-(N(omega)-L-arginino)succinate + AMP + diphosphate + H(+)</text>
        <dbReference type="Rhea" id="RHEA:10932"/>
        <dbReference type="ChEBI" id="CHEBI:15378"/>
        <dbReference type="ChEBI" id="CHEBI:29991"/>
        <dbReference type="ChEBI" id="CHEBI:30616"/>
        <dbReference type="ChEBI" id="CHEBI:33019"/>
        <dbReference type="ChEBI" id="CHEBI:57472"/>
        <dbReference type="ChEBI" id="CHEBI:57743"/>
        <dbReference type="ChEBI" id="CHEBI:456215"/>
        <dbReference type="EC" id="6.3.4.5"/>
    </reaction>
</comment>
<comment type="pathway">
    <text evidence="1">Amino-acid biosynthesis; L-arginine biosynthesis; L-arginine from L-ornithine and carbamoyl phosphate: step 2/3.</text>
</comment>
<comment type="subunit">
    <text evidence="1">Homotetramer.</text>
</comment>
<comment type="subcellular location">
    <subcellularLocation>
        <location evidence="1">Cytoplasm</location>
    </subcellularLocation>
</comment>
<comment type="similarity">
    <text evidence="1">Belongs to the argininosuccinate synthase family. Type 1 subfamily.</text>
</comment>
<accession>B9DVV9</accession>
<organism>
    <name type="scientific">Streptococcus uberis (strain ATCC BAA-854 / 0140J)</name>
    <dbReference type="NCBI Taxonomy" id="218495"/>
    <lineage>
        <taxon>Bacteria</taxon>
        <taxon>Bacillati</taxon>
        <taxon>Bacillota</taxon>
        <taxon>Bacilli</taxon>
        <taxon>Lactobacillales</taxon>
        <taxon>Streptococcaceae</taxon>
        <taxon>Streptococcus</taxon>
    </lineage>
</organism>
<feature type="chain" id="PRO_1000116293" description="Argininosuccinate synthase">
    <location>
        <begin position="1"/>
        <end position="399"/>
    </location>
</feature>
<feature type="binding site" evidence="1">
    <location>
        <begin position="9"/>
        <end position="17"/>
    </location>
    <ligand>
        <name>ATP</name>
        <dbReference type="ChEBI" id="CHEBI:30616"/>
    </ligand>
</feature>
<feature type="binding site" evidence="1">
    <location>
        <position position="85"/>
    </location>
    <ligand>
        <name>L-citrulline</name>
        <dbReference type="ChEBI" id="CHEBI:57743"/>
    </ligand>
</feature>
<feature type="binding site" evidence="1">
    <location>
        <position position="115"/>
    </location>
    <ligand>
        <name>ATP</name>
        <dbReference type="ChEBI" id="CHEBI:30616"/>
    </ligand>
</feature>
<feature type="binding site" evidence="1">
    <location>
        <position position="117"/>
    </location>
    <ligand>
        <name>L-aspartate</name>
        <dbReference type="ChEBI" id="CHEBI:29991"/>
    </ligand>
</feature>
<feature type="binding site" evidence="1">
    <location>
        <position position="121"/>
    </location>
    <ligand>
        <name>L-aspartate</name>
        <dbReference type="ChEBI" id="CHEBI:29991"/>
    </ligand>
</feature>
<feature type="binding site" evidence="1">
    <location>
        <position position="121"/>
    </location>
    <ligand>
        <name>L-citrulline</name>
        <dbReference type="ChEBI" id="CHEBI:57743"/>
    </ligand>
</feature>
<feature type="binding site" evidence="1">
    <location>
        <position position="122"/>
    </location>
    <ligand>
        <name>L-aspartate</name>
        <dbReference type="ChEBI" id="CHEBI:29991"/>
    </ligand>
</feature>
<feature type="binding site" evidence="1">
    <location>
        <position position="125"/>
    </location>
    <ligand>
        <name>L-citrulline</name>
        <dbReference type="ChEBI" id="CHEBI:57743"/>
    </ligand>
</feature>
<feature type="binding site" evidence="1">
    <location>
        <position position="173"/>
    </location>
    <ligand>
        <name>L-citrulline</name>
        <dbReference type="ChEBI" id="CHEBI:57743"/>
    </ligand>
</feature>
<feature type="binding site" evidence="1">
    <location>
        <position position="258"/>
    </location>
    <ligand>
        <name>L-citrulline</name>
        <dbReference type="ChEBI" id="CHEBI:57743"/>
    </ligand>
</feature>
<feature type="binding site" evidence="1">
    <location>
        <position position="270"/>
    </location>
    <ligand>
        <name>L-citrulline</name>
        <dbReference type="ChEBI" id="CHEBI:57743"/>
    </ligand>
</feature>
<protein>
    <recommendedName>
        <fullName evidence="1">Argininosuccinate synthase</fullName>
        <ecNumber evidence="1">6.3.4.5</ecNumber>
    </recommendedName>
    <alternativeName>
        <fullName evidence="1">Citrulline--aspartate ligase</fullName>
    </alternativeName>
</protein>
<keyword id="KW-0028">Amino-acid biosynthesis</keyword>
<keyword id="KW-0055">Arginine biosynthesis</keyword>
<keyword id="KW-0067">ATP-binding</keyword>
<keyword id="KW-0963">Cytoplasm</keyword>
<keyword id="KW-0436">Ligase</keyword>
<keyword id="KW-0547">Nucleotide-binding</keyword>
<keyword id="KW-1185">Reference proteome</keyword>
<reference key="1">
    <citation type="journal article" date="2009" name="BMC Genomics">
        <title>Evidence for niche adaptation in the genome of the bovine pathogen Streptococcus uberis.</title>
        <authorList>
            <person name="Ward P.N."/>
            <person name="Holden M.T.G."/>
            <person name="Leigh J.A."/>
            <person name="Lennard N."/>
            <person name="Bignell A."/>
            <person name="Barron A."/>
            <person name="Clark L."/>
            <person name="Quail M.A."/>
            <person name="Woodward J."/>
            <person name="Barrell B.G."/>
            <person name="Egan S.A."/>
            <person name="Field T.R."/>
            <person name="Maskell D."/>
            <person name="Kehoe M."/>
            <person name="Dowson C.G."/>
            <person name="Chanter N."/>
            <person name="Whatmore A.M."/>
            <person name="Bentley S.D."/>
            <person name="Parkhill J."/>
        </authorList>
    </citation>
    <scope>NUCLEOTIDE SEQUENCE [LARGE SCALE GENOMIC DNA]</scope>
    <source>
        <strain>ATCC BAA-854 / 0140J</strain>
    </source>
</reference>
<evidence type="ECO:0000255" key="1">
    <source>
        <dbReference type="HAMAP-Rule" id="MF_00005"/>
    </source>
</evidence>
<name>ASSY_STRU0</name>
<sequence>MNKNKIVLAYSGGLDTSVAIAWLKKDFDVIAVCMDVGEGKDLQFIHEKALKIGAIESYVIDVKEEFAEAFVLPALQAHAFYEQKYPLVSALSRPLISKKLVDIAHECGATYIAHGCTGKGNDQVRFEIAIAALDPTIEVIAPVRDWHWSREEEIAFAKENGVPIPADLDNPYSVDQNLWGRANECGVLENPWNQAPEEAYDMTVSPEEAPDRPEYIDITFEAGVPIALNGKVLSLANLIIELNQIAGAHGIGRIDHVENRLVGIKSREIYECPGAITLLAAHKEIEDLTFVREVSHFKPILENELSNLIYNGLWYNPATQAILSYLKETQKVVNGIAKVKLYKGHVQVVARQSDNSLYDENLATYTSADSFDQEAAIGFIKLWGLPTQVNAQVNKKGVV</sequence>